<reference key="1">
    <citation type="submission" date="2006-10" db="EMBL/GenBank/DDBJ databases">
        <title>Complete sequence of chromosome of Pelobacter propionicus DSM 2379.</title>
        <authorList>
            <consortium name="US DOE Joint Genome Institute"/>
            <person name="Copeland A."/>
            <person name="Lucas S."/>
            <person name="Lapidus A."/>
            <person name="Barry K."/>
            <person name="Detter J.C."/>
            <person name="Glavina del Rio T."/>
            <person name="Hammon N."/>
            <person name="Israni S."/>
            <person name="Dalin E."/>
            <person name="Tice H."/>
            <person name="Pitluck S."/>
            <person name="Saunders E."/>
            <person name="Brettin T."/>
            <person name="Bruce D."/>
            <person name="Han C."/>
            <person name="Tapia R."/>
            <person name="Schmutz J."/>
            <person name="Larimer F."/>
            <person name="Land M."/>
            <person name="Hauser L."/>
            <person name="Kyrpides N."/>
            <person name="Kim E."/>
            <person name="Lovley D."/>
            <person name="Richardson P."/>
        </authorList>
    </citation>
    <scope>NUCLEOTIDE SEQUENCE [LARGE SCALE GENOMIC DNA]</scope>
    <source>
        <strain>DSM 2379 / NBRC 103807 / OttBd1</strain>
    </source>
</reference>
<keyword id="KW-0963">Cytoplasm</keyword>
<keyword id="KW-0210">Decarboxylase</keyword>
<keyword id="KW-0456">Lyase</keyword>
<keyword id="KW-0627">Porphyrin biosynthesis</keyword>
<keyword id="KW-1185">Reference proteome</keyword>
<feature type="chain" id="PRO_0000325671" description="Uroporphyrinogen decarboxylase">
    <location>
        <begin position="1"/>
        <end position="340"/>
    </location>
</feature>
<feature type="binding site" evidence="1">
    <location>
        <begin position="23"/>
        <end position="27"/>
    </location>
    <ligand>
        <name>substrate</name>
    </ligand>
</feature>
<feature type="binding site" evidence="1">
    <location>
        <position position="72"/>
    </location>
    <ligand>
        <name>substrate</name>
    </ligand>
</feature>
<feature type="binding site" evidence="1">
    <location>
        <position position="147"/>
    </location>
    <ligand>
        <name>substrate</name>
    </ligand>
</feature>
<feature type="binding site" evidence="1">
    <location>
        <position position="202"/>
    </location>
    <ligand>
        <name>substrate</name>
    </ligand>
</feature>
<feature type="binding site" evidence="1">
    <location>
        <position position="316"/>
    </location>
    <ligand>
        <name>substrate</name>
    </ligand>
</feature>
<feature type="site" description="Transition state stabilizer" evidence="1">
    <location>
        <position position="72"/>
    </location>
</feature>
<organism>
    <name type="scientific">Pelobacter propionicus (strain DSM 2379 / NBRC 103807 / OttBd1)</name>
    <dbReference type="NCBI Taxonomy" id="338966"/>
    <lineage>
        <taxon>Bacteria</taxon>
        <taxon>Pseudomonadati</taxon>
        <taxon>Thermodesulfobacteriota</taxon>
        <taxon>Desulfuromonadia</taxon>
        <taxon>Desulfuromonadales</taxon>
        <taxon>Desulfuromonadaceae</taxon>
        <taxon>Pelobacter</taxon>
    </lineage>
</organism>
<dbReference type="EC" id="4.1.1.37" evidence="1"/>
<dbReference type="EMBL" id="CP000482">
    <property type="protein sequence ID" value="ABK98250.1"/>
    <property type="molecule type" value="Genomic_DNA"/>
</dbReference>
<dbReference type="RefSeq" id="WP_011734563.1">
    <property type="nucleotide sequence ID" value="NC_008609.1"/>
</dbReference>
<dbReference type="SMR" id="A1ALN0"/>
<dbReference type="STRING" id="338966.Ppro_0619"/>
<dbReference type="KEGG" id="ppd:Ppro_0619"/>
<dbReference type="eggNOG" id="COG0407">
    <property type="taxonomic scope" value="Bacteria"/>
</dbReference>
<dbReference type="HOGENOM" id="CLU_040933_0_1_7"/>
<dbReference type="OrthoDB" id="9806656at2"/>
<dbReference type="UniPathway" id="UPA00251">
    <property type="reaction ID" value="UER00321"/>
</dbReference>
<dbReference type="Proteomes" id="UP000006732">
    <property type="component" value="Chromosome"/>
</dbReference>
<dbReference type="GO" id="GO:0005829">
    <property type="term" value="C:cytosol"/>
    <property type="evidence" value="ECO:0007669"/>
    <property type="project" value="TreeGrafter"/>
</dbReference>
<dbReference type="GO" id="GO:0004853">
    <property type="term" value="F:uroporphyrinogen decarboxylase activity"/>
    <property type="evidence" value="ECO:0007669"/>
    <property type="project" value="UniProtKB-UniRule"/>
</dbReference>
<dbReference type="GO" id="GO:0019353">
    <property type="term" value="P:protoporphyrinogen IX biosynthetic process from glutamate"/>
    <property type="evidence" value="ECO:0007669"/>
    <property type="project" value="TreeGrafter"/>
</dbReference>
<dbReference type="CDD" id="cd00717">
    <property type="entry name" value="URO-D"/>
    <property type="match status" value="1"/>
</dbReference>
<dbReference type="FunFam" id="3.20.20.210:FF:000008">
    <property type="entry name" value="Uroporphyrinogen decarboxylase"/>
    <property type="match status" value="1"/>
</dbReference>
<dbReference type="Gene3D" id="3.20.20.210">
    <property type="match status" value="1"/>
</dbReference>
<dbReference type="HAMAP" id="MF_00218">
    <property type="entry name" value="URO_D"/>
    <property type="match status" value="1"/>
</dbReference>
<dbReference type="InterPro" id="IPR038071">
    <property type="entry name" value="UROD/MetE-like_sf"/>
</dbReference>
<dbReference type="InterPro" id="IPR006361">
    <property type="entry name" value="Uroporphyrinogen_deCO2ase_HemE"/>
</dbReference>
<dbReference type="InterPro" id="IPR000257">
    <property type="entry name" value="Uroporphyrinogen_deCOase"/>
</dbReference>
<dbReference type="NCBIfam" id="TIGR01464">
    <property type="entry name" value="hemE"/>
    <property type="match status" value="1"/>
</dbReference>
<dbReference type="PANTHER" id="PTHR21091">
    <property type="entry name" value="METHYLTETRAHYDROFOLATE:HOMOCYSTEINE METHYLTRANSFERASE RELATED"/>
    <property type="match status" value="1"/>
</dbReference>
<dbReference type="PANTHER" id="PTHR21091:SF169">
    <property type="entry name" value="UROPORPHYRINOGEN DECARBOXYLASE"/>
    <property type="match status" value="1"/>
</dbReference>
<dbReference type="Pfam" id="PF01208">
    <property type="entry name" value="URO-D"/>
    <property type="match status" value="1"/>
</dbReference>
<dbReference type="SUPFAM" id="SSF51726">
    <property type="entry name" value="UROD/MetE-like"/>
    <property type="match status" value="1"/>
</dbReference>
<dbReference type="PROSITE" id="PS00906">
    <property type="entry name" value="UROD_1"/>
    <property type="match status" value="1"/>
</dbReference>
<dbReference type="PROSITE" id="PS00907">
    <property type="entry name" value="UROD_2"/>
    <property type="match status" value="1"/>
</dbReference>
<comment type="function">
    <text evidence="1">Catalyzes the decarboxylation of four acetate groups of uroporphyrinogen-III to yield coproporphyrinogen-III.</text>
</comment>
<comment type="catalytic activity">
    <reaction evidence="1">
        <text>uroporphyrinogen III + 4 H(+) = coproporphyrinogen III + 4 CO2</text>
        <dbReference type="Rhea" id="RHEA:19865"/>
        <dbReference type="ChEBI" id="CHEBI:15378"/>
        <dbReference type="ChEBI" id="CHEBI:16526"/>
        <dbReference type="ChEBI" id="CHEBI:57308"/>
        <dbReference type="ChEBI" id="CHEBI:57309"/>
        <dbReference type="EC" id="4.1.1.37"/>
    </reaction>
</comment>
<comment type="pathway">
    <text evidence="1">Porphyrin-containing compound metabolism; protoporphyrin-IX biosynthesis; coproporphyrinogen-III from 5-aminolevulinate: step 4/4.</text>
</comment>
<comment type="subunit">
    <text evidence="1">Homodimer.</text>
</comment>
<comment type="subcellular location">
    <subcellularLocation>
        <location evidence="1">Cytoplasm</location>
    </subcellularLocation>
</comment>
<comment type="similarity">
    <text evidence="1">Belongs to the uroporphyrinogen decarboxylase family.</text>
</comment>
<accession>A1ALN0</accession>
<evidence type="ECO:0000255" key="1">
    <source>
        <dbReference type="HAMAP-Rule" id="MF_00218"/>
    </source>
</evidence>
<sequence>MNTRFLDACWGKPVDRVPVWLMRQAGRYLPEYMAVRSRCTFLELCKTPELAAQVSLQPVDILGVDAAILFSDILTPVEPMGMKLDFVPGPVFEKPVRCMADVERLRIPRMEDDLPFVFDIIRILRRELADRVPLIGFGGAPFTLACYMVEGKGSKDFVQIKRMMYSAPDVYAALMEKITTMSMEYLNAQIAAGAQAIQIFDTWGGILSPSDYRTHVLPHTTRLINGLNRLTTPVIHFVKGAGTMLETVREAGGDVIGLDWHVDLATARNQLGPGVAVQGNLDPTVLFAPQAVIEQQVQRVLDENRGLPGFIFNLGHGILPTVPAENARFMVQCVQRLSRS</sequence>
<proteinExistence type="inferred from homology"/>
<gene>
    <name evidence="1" type="primary">hemE</name>
    <name type="ordered locus">Ppro_0619</name>
</gene>
<name>DCUP_PELPD</name>
<protein>
    <recommendedName>
        <fullName evidence="1">Uroporphyrinogen decarboxylase</fullName>
        <shortName evidence="1">UPD</shortName>
        <shortName evidence="1">URO-D</shortName>
        <ecNumber evidence="1">4.1.1.37</ecNumber>
    </recommendedName>
</protein>